<dbReference type="EC" id="4.3.2.3" evidence="1"/>
<dbReference type="EMBL" id="CP000390">
    <property type="protein sequence ID" value="ABG64205.1"/>
    <property type="molecule type" value="Genomic_DNA"/>
</dbReference>
<dbReference type="SMR" id="Q11EH0"/>
<dbReference type="STRING" id="266779.Meso_2829"/>
<dbReference type="KEGG" id="mes:Meso_2829"/>
<dbReference type="eggNOG" id="COG3194">
    <property type="taxonomic scope" value="Bacteria"/>
</dbReference>
<dbReference type="HOGENOM" id="CLU_070848_1_0_5"/>
<dbReference type="OrthoDB" id="9804602at2"/>
<dbReference type="UniPathway" id="UPA00395"/>
<dbReference type="GO" id="GO:0004848">
    <property type="term" value="F:ureidoglycolate hydrolase activity"/>
    <property type="evidence" value="ECO:0007669"/>
    <property type="project" value="InterPro"/>
</dbReference>
<dbReference type="GO" id="GO:0050385">
    <property type="term" value="F:ureidoglycolate lyase activity"/>
    <property type="evidence" value="ECO:0007669"/>
    <property type="project" value="UniProtKB-UniRule"/>
</dbReference>
<dbReference type="GO" id="GO:0000256">
    <property type="term" value="P:allantoin catabolic process"/>
    <property type="evidence" value="ECO:0007669"/>
    <property type="project" value="UniProtKB-UniRule"/>
</dbReference>
<dbReference type="GO" id="GO:0006145">
    <property type="term" value="P:purine nucleobase catabolic process"/>
    <property type="evidence" value="ECO:0007669"/>
    <property type="project" value="UniProtKB-UniRule"/>
</dbReference>
<dbReference type="CDD" id="cd20298">
    <property type="entry name" value="cupin_UAH"/>
    <property type="match status" value="1"/>
</dbReference>
<dbReference type="Gene3D" id="2.60.120.480">
    <property type="entry name" value="Ureidoglycolate hydrolase"/>
    <property type="match status" value="1"/>
</dbReference>
<dbReference type="HAMAP" id="MF_00616">
    <property type="entry name" value="Ureidogly_lyase"/>
    <property type="match status" value="1"/>
</dbReference>
<dbReference type="InterPro" id="IPR011051">
    <property type="entry name" value="RmlC_Cupin_sf"/>
</dbReference>
<dbReference type="InterPro" id="IPR047233">
    <property type="entry name" value="UAH_cupin"/>
</dbReference>
<dbReference type="InterPro" id="IPR007247">
    <property type="entry name" value="Ureidogly_lyase"/>
</dbReference>
<dbReference type="InterPro" id="IPR023525">
    <property type="entry name" value="Ureidogly_lyase_bac"/>
</dbReference>
<dbReference type="InterPro" id="IPR024060">
    <property type="entry name" value="Ureidoglycolate_lyase_dom_sf"/>
</dbReference>
<dbReference type="NCBIfam" id="NF009932">
    <property type="entry name" value="PRK13395.1"/>
    <property type="match status" value="1"/>
</dbReference>
<dbReference type="PANTHER" id="PTHR21221">
    <property type="entry name" value="UREIDOGLYCOLATE HYDROLASE"/>
    <property type="match status" value="1"/>
</dbReference>
<dbReference type="PANTHER" id="PTHR21221:SF1">
    <property type="entry name" value="UREIDOGLYCOLATE LYASE"/>
    <property type="match status" value="1"/>
</dbReference>
<dbReference type="Pfam" id="PF04115">
    <property type="entry name" value="Ureidogly_lyase"/>
    <property type="match status" value="1"/>
</dbReference>
<dbReference type="PIRSF" id="PIRSF017306">
    <property type="entry name" value="Ureidogly_hydro"/>
    <property type="match status" value="1"/>
</dbReference>
<dbReference type="SUPFAM" id="SSF51182">
    <property type="entry name" value="RmlC-like cupins"/>
    <property type="match status" value="1"/>
</dbReference>
<feature type="chain" id="PRO_1000061356" description="Ureidoglycolate lyase">
    <location>
        <begin position="1"/>
        <end position="165"/>
    </location>
</feature>
<organism>
    <name type="scientific">Chelativorans sp. (strain BNC1)</name>
    <dbReference type="NCBI Taxonomy" id="266779"/>
    <lineage>
        <taxon>Bacteria</taxon>
        <taxon>Pseudomonadati</taxon>
        <taxon>Pseudomonadota</taxon>
        <taxon>Alphaproteobacteria</taxon>
        <taxon>Hyphomicrobiales</taxon>
        <taxon>Phyllobacteriaceae</taxon>
        <taxon>Chelativorans</taxon>
    </lineage>
</organism>
<protein>
    <recommendedName>
        <fullName evidence="1">Ureidoglycolate lyase</fullName>
        <ecNumber evidence="1">4.3.2.3</ecNumber>
    </recommendedName>
    <alternativeName>
        <fullName evidence="1">Ureidoglycolatase</fullName>
    </alternativeName>
</protein>
<evidence type="ECO:0000255" key="1">
    <source>
        <dbReference type="HAMAP-Rule" id="MF_00616"/>
    </source>
</evidence>
<comment type="function">
    <text evidence="1">Catalyzes the catabolism of the allantoin degradation intermediate (S)-ureidoglycolate, generating urea and glyoxylate. Involved in the utilization of allantoin as nitrogen source.</text>
</comment>
<comment type="catalytic activity">
    <reaction evidence="1">
        <text>(S)-ureidoglycolate = urea + glyoxylate</text>
        <dbReference type="Rhea" id="RHEA:11304"/>
        <dbReference type="ChEBI" id="CHEBI:16199"/>
        <dbReference type="ChEBI" id="CHEBI:36655"/>
        <dbReference type="ChEBI" id="CHEBI:57296"/>
        <dbReference type="EC" id="4.3.2.3"/>
    </reaction>
</comment>
<comment type="cofactor">
    <cofactor evidence="1">
        <name>Ni(2+)</name>
        <dbReference type="ChEBI" id="CHEBI:49786"/>
    </cofactor>
</comment>
<comment type="pathway">
    <text evidence="1">Nitrogen metabolism; (S)-allantoin degradation.</text>
</comment>
<comment type="subunit">
    <text evidence="1">Homodimer.</text>
</comment>
<comment type="similarity">
    <text evidence="1">Belongs to the ureidoglycolate lyase family.</text>
</comment>
<accession>Q11EH0</accession>
<gene>
    <name evidence="1" type="primary">allA</name>
    <name type="ordered locus">Meso_2829</name>
</gene>
<reference key="1">
    <citation type="submission" date="2006-06" db="EMBL/GenBank/DDBJ databases">
        <title>Complete sequence of chromosome of Mesorhizobium sp. BNC1.</title>
        <authorList>
            <consortium name="US DOE Joint Genome Institute"/>
            <person name="Copeland A."/>
            <person name="Lucas S."/>
            <person name="Lapidus A."/>
            <person name="Barry K."/>
            <person name="Detter J.C."/>
            <person name="Glavina del Rio T."/>
            <person name="Hammon N."/>
            <person name="Israni S."/>
            <person name="Dalin E."/>
            <person name="Tice H."/>
            <person name="Pitluck S."/>
            <person name="Chertkov O."/>
            <person name="Brettin T."/>
            <person name="Bruce D."/>
            <person name="Han C."/>
            <person name="Tapia R."/>
            <person name="Gilna P."/>
            <person name="Schmutz J."/>
            <person name="Larimer F."/>
            <person name="Land M."/>
            <person name="Hauser L."/>
            <person name="Kyrpides N."/>
            <person name="Mikhailova N."/>
            <person name="Richardson P."/>
        </authorList>
    </citation>
    <scope>NUCLEOTIDE SEQUENCE [LARGE SCALE GENOMIC DNA]</scope>
    <source>
        <strain>BNC1</strain>
    </source>
</reference>
<keyword id="KW-0456">Lyase</keyword>
<keyword id="KW-0659">Purine metabolism</keyword>
<proteinExistence type="inferred from homology"/>
<name>ALLA_CHESB</name>
<sequence length="165" mass="18305">MRKIIAEPLTKDAFAPFGDVIEAEEGTSFPINNGKTQRFHDLAKVEVGGENARVMVSIARGQPYDLPLTLNMVERHPLGSQAFMPLTSSPFLVIVCPDESGRPGVPRAFITKPGQGVNYARNTWHGVLTPIGEEQDFLIVDRGGEGNNLEEFFFPEPYEIHLPER</sequence>